<protein>
    <recommendedName>
        <fullName evidence="1">Adenine phosphoribosyltransferase</fullName>
        <shortName evidence="1">APRT</shortName>
        <ecNumber evidence="1">2.4.2.7</ecNumber>
    </recommendedName>
</protein>
<proteinExistence type="inferred from homology"/>
<reference key="1">
    <citation type="journal article" date="2000" name="Nature">
        <title>The complete sequence of the mucosal pathogen Ureaplasma urealyticum.</title>
        <authorList>
            <person name="Glass J.I."/>
            <person name="Lefkowitz E.J."/>
            <person name="Glass J.S."/>
            <person name="Heiner C.R."/>
            <person name="Chen E.Y."/>
            <person name="Cassell G.H."/>
        </authorList>
    </citation>
    <scope>NUCLEOTIDE SEQUENCE [LARGE SCALE GENOMIC DNA]</scope>
    <source>
        <strain>ATCC 700970</strain>
    </source>
</reference>
<feature type="chain" id="PRO_0000149482" description="Adenine phosphoribosyltransferase">
    <location>
        <begin position="1"/>
        <end position="173"/>
    </location>
</feature>
<organism>
    <name type="scientific">Ureaplasma parvum serovar 3 (strain ATCC 700970)</name>
    <dbReference type="NCBI Taxonomy" id="273119"/>
    <lineage>
        <taxon>Bacteria</taxon>
        <taxon>Bacillati</taxon>
        <taxon>Mycoplasmatota</taxon>
        <taxon>Mycoplasmoidales</taxon>
        <taxon>Mycoplasmoidaceae</taxon>
        <taxon>Ureaplasma</taxon>
    </lineage>
</organism>
<keyword id="KW-0963">Cytoplasm</keyword>
<keyword id="KW-0328">Glycosyltransferase</keyword>
<keyword id="KW-0660">Purine salvage</keyword>
<keyword id="KW-1185">Reference proteome</keyword>
<keyword id="KW-0808">Transferase</keyword>
<name>APT_UREPA</name>
<accession>Q9PQ02</accession>
<dbReference type="EC" id="2.4.2.7" evidence="1"/>
<dbReference type="EMBL" id="AF222894">
    <property type="protein sequence ID" value="AAF30900.1"/>
    <property type="molecule type" value="Genomic_DNA"/>
</dbReference>
<dbReference type="RefSeq" id="WP_006688428.1">
    <property type="nucleotide sequence ID" value="NC_002162.1"/>
</dbReference>
<dbReference type="SMR" id="Q9PQ02"/>
<dbReference type="STRING" id="273119.UU488"/>
<dbReference type="EnsemblBacteria" id="AAF30900">
    <property type="protein sequence ID" value="AAF30900"/>
    <property type="gene ID" value="UU488"/>
</dbReference>
<dbReference type="GeneID" id="29672626"/>
<dbReference type="KEGG" id="uur:UU488"/>
<dbReference type="eggNOG" id="COG0503">
    <property type="taxonomic scope" value="Bacteria"/>
</dbReference>
<dbReference type="HOGENOM" id="CLU_063339_3_0_14"/>
<dbReference type="OrthoDB" id="9803963at2"/>
<dbReference type="UniPathway" id="UPA00588">
    <property type="reaction ID" value="UER00646"/>
</dbReference>
<dbReference type="Proteomes" id="UP000000423">
    <property type="component" value="Chromosome"/>
</dbReference>
<dbReference type="GO" id="GO:0005737">
    <property type="term" value="C:cytoplasm"/>
    <property type="evidence" value="ECO:0007669"/>
    <property type="project" value="UniProtKB-SubCell"/>
</dbReference>
<dbReference type="GO" id="GO:0002055">
    <property type="term" value="F:adenine binding"/>
    <property type="evidence" value="ECO:0007669"/>
    <property type="project" value="TreeGrafter"/>
</dbReference>
<dbReference type="GO" id="GO:0003999">
    <property type="term" value="F:adenine phosphoribosyltransferase activity"/>
    <property type="evidence" value="ECO:0007669"/>
    <property type="project" value="UniProtKB-UniRule"/>
</dbReference>
<dbReference type="GO" id="GO:0016208">
    <property type="term" value="F:AMP binding"/>
    <property type="evidence" value="ECO:0007669"/>
    <property type="project" value="TreeGrafter"/>
</dbReference>
<dbReference type="GO" id="GO:0006168">
    <property type="term" value="P:adenine salvage"/>
    <property type="evidence" value="ECO:0007669"/>
    <property type="project" value="InterPro"/>
</dbReference>
<dbReference type="GO" id="GO:0044209">
    <property type="term" value="P:AMP salvage"/>
    <property type="evidence" value="ECO:0007669"/>
    <property type="project" value="UniProtKB-UniRule"/>
</dbReference>
<dbReference type="GO" id="GO:0006166">
    <property type="term" value="P:purine ribonucleoside salvage"/>
    <property type="evidence" value="ECO:0007669"/>
    <property type="project" value="UniProtKB-KW"/>
</dbReference>
<dbReference type="CDD" id="cd06223">
    <property type="entry name" value="PRTases_typeI"/>
    <property type="match status" value="1"/>
</dbReference>
<dbReference type="FunFam" id="3.40.50.2020:FF:000021">
    <property type="entry name" value="Adenine phosphoribosyltransferase"/>
    <property type="match status" value="1"/>
</dbReference>
<dbReference type="Gene3D" id="3.40.50.2020">
    <property type="match status" value="1"/>
</dbReference>
<dbReference type="HAMAP" id="MF_00004">
    <property type="entry name" value="Aden_phosphoribosyltr"/>
    <property type="match status" value="1"/>
</dbReference>
<dbReference type="InterPro" id="IPR005764">
    <property type="entry name" value="Ade_phspho_trans"/>
</dbReference>
<dbReference type="InterPro" id="IPR000836">
    <property type="entry name" value="PRibTrfase_dom"/>
</dbReference>
<dbReference type="InterPro" id="IPR029057">
    <property type="entry name" value="PRTase-like"/>
</dbReference>
<dbReference type="InterPro" id="IPR050054">
    <property type="entry name" value="UPRTase/APRTase"/>
</dbReference>
<dbReference type="NCBIfam" id="TIGR01090">
    <property type="entry name" value="apt"/>
    <property type="match status" value="1"/>
</dbReference>
<dbReference type="NCBIfam" id="NF002634">
    <property type="entry name" value="PRK02304.1-3"/>
    <property type="match status" value="1"/>
</dbReference>
<dbReference type="NCBIfam" id="NF002636">
    <property type="entry name" value="PRK02304.1-5"/>
    <property type="match status" value="1"/>
</dbReference>
<dbReference type="PANTHER" id="PTHR32315">
    <property type="entry name" value="ADENINE PHOSPHORIBOSYLTRANSFERASE"/>
    <property type="match status" value="1"/>
</dbReference>
<dbReference type="PANTHER" id="PTHR32315:SF3">
    <property type="entry name" value="ADENINE PHOSPHORIBOSYLTRANSFERASE"/>
    <property type="match status" value="1"/>
</dbReference>
<dbReference type="Pfam" id="PF00156">
    <property type="entry name" value="Pribosyltran"/>
    <property type="match status" value="1"/>
</dbReference>
<dbReference type="SUPFAM" id="SSF53271">
    <property type="entry name" value="PRTase-like"/>
    <property type="match status" value="1"/>
</dbReference>
<dbReference type="PROSITE" id="PS00103">
    <property type="entry name" value="PUR_PYR_PR_TRANSFER"/>
    <property type="match status" value="1"/>
</dbReference>
<evidence type="ECO:0000255" key="1">
    <source>
        <dbReference type="HAMAP-Rule" id="MF_00004"/>
    </source>
</evidence>
<comment type="function">
    <text evidence="1">Catalyzes a salvage reaction resulting in the formation of AMP, that is energically less costly than de novo synthesis.</text>
</comment>
<comment type="catalytic activity">
    <reaction evidence="1">
        <text>AMP + diphosphate = 5-phospho-alpha-D-ribose 1-diphosphate + adenine</text>
        <dbReference type="Rhea" id="RHEA:16609"/>
        <dbReference type="ChEBI" id="CHEBI:16708"/>
        <dbReference type="ChEBI" id="CHEBI:33019"/>
        <dbReference type="ChEBI" id="CHEBI:58017"/>
        <dbReference type="ChEBI" id="CHEBI:456215"/>
        <dbReference type="EC" id="2.4.2.7"/>
    </reaction>
</comment>
<comment type="pathway">
    <text evidence="1">Purine metabolism; AMP biosynthesis via salvage pathway; AMP from adenine: step 1/1.</text>
</comment>
<comment type="subunit">
    <text evidence="1">Homodimer.</text>
</comment>
<comment type="subcellular location">
    <subcellularLocation>
        <location evidence="1">Cytoplasm</location>
    </subcellularLocation>
</comment>
<comment type="similarity">
    <text evidence="1">Belongs to the purine/pyrimidine phosphoribosyltransferase family.</text>
</comment>
<gene>
    <name evidence="1" type="primary">apt</name>
    <name type="ordered locus">UU488</name>
</gene>
<sequence>MINIDYIKSKIRDVPDFPKKGIVFKDITPLFLEPKIIEKIVDDFADFAKSLNIDAIIGAESRGFLFAAPLSIKLNKPFILVRKPNKLPNDVYSAEYTLEYGSSRVEMHKDALKPNQRVLIVDDLLATGGTVAAIENLVRQAKGIVAGSVYLIRLGFLKGEEKLSGKVHALINY</sequence>